<dbReference type="EC" id="4.1.2.50"/>
<dbReference type="EMBL" id="AE013218">
    <property type="protein sequence ID" value="AAM67953.1"/>
    <property type="molecule type" value="Genomic_DNA"/>
</dbReference>
<dbReference type="RefSeq" id="WP_011053920.1">
    <property type="nucleotide sequence ID" value="NC_004061.1"/>
</dbReference>
<dbReference type="SMR" id="Q8K9D8"/>
<dbReference type="STRING" id="198804.BUsg_402"/>
<dbReference type="GeneID" id="93003876"/>
<dbReference type="KEGG" id="bas:BUsg_402"/>
<dbReference type="eggNOG" id="COG0720">
    <property type="taxonomic scope" value="Bacteria"/>
</dbReference>
<dbReference type="HOGENOM" id="CLU_111016_6_1_6"/>
<dbReference type="UniPathway" id="UPA00391"/>
<dbReference type="Proteomes" id="UP000000416">
    <property type="component" value="Chromosome"/>
</dbReference>
<dbReference type="GO" id="GO:0070497">
    <property type="term" value="F:6-carboxytetrahydropterin synthase activity"/>
    <property type="evidence" value="ECO:0007669"/>
    <property type="project" value="UniProtKB-EC"/>
</dbReference>
<dbReference type="GO" id="GO:0046872">
    <property type="term" value="F:metal ion binding"/>
    <property type="evidence" value="ECO:0007669"/>
    <property type="project" value="UniProtKB-KW"/>
</dbReference>
<dbReference type="GO" id="GO:0008616">
    <property type="term" value="P:queuosine biosynthetic process"/>
    <property type="evidence" value="ECO:0007669"/>
    <property type="project" value="UniProtKB-KW"/>
</dbReference>
<dbReference type="FunFam" id="3.30.479.10:FF:000001">
    <property type="entry name" value="6-carboxy-5,6,7,8-tetrahydropterin synthase"/>
    <property type="match status" value="1"/>
</dbReference>
<dbReference type="Gene3D" id="3.30.479.10">
    <property type="entry name" value="6-pyruvoyl tetrahydropterin synthase/QueD"/>
    <property type="match status" value="1"/>
</dbReference>
<dbReference type="InterPro" id="IPR007115">
    <property type="entry name" value="6-PTP_synth/QueD"/>
</dbReference>
<dbReference type="InterPro" id="IPR038418">
    <property type="entry name" value="6-PTP_synth/QueD_sf"/>
</dbReference>
<dbReference type="NCBIfam" id="TIGR03367">
    <property type="entry name" value="queuosine_QueD"/>
    <property type="match status" value="1"/>
</dbReference>
<dbReference type="PANTHER" id="PTHR12589:SF7">
    <property type="entry name" value="6-PYRUVOYL TETRAHYDROBIOPTERIN SYNTHASE"/>
    <property type="match status" value="1"/>
</dbReference>
<dbReference type="PANTHER" id="PTHR12589">
    <property type="entry name" value="PYRUVOYL TETRAHYDROBIOPTERIN SYNTHASE"/>
    <property type="match status" value="1"/>
</dbReference>
<dbReference type="Pfam" id="PF01242">
    <property type="entry name" value="PTPS"/>
    <property type="match status" value="1"/>
</dbReference>
<dbReference type="PIRSF" id="PIRSF006113">
    <property type="entry name" value="PTP_synth"/>
    <property type="match status" value="1"/>
</dbReference>
<dbReference type="SUPFAM" id="SSF55620">
    <property type="entry name" value="Tetrahydrobiopterin biosynthesis enzymes-like"/>
    <property type="match status" value="1"/>
</dbReference>
<reference key="1">
    <citation type="journal article" date="2002" name="Science">
        <title>50 million years of genomic stasis in endosymbiotic bacteria.</title>
        <authorList>
            <person name="Tamas I."/>
            <person name="Klasson L."/>
            <person name="Canbaeck B."/>
            <person name="Naeslund A.K."/>
            <person name="Eriksson A.-S."/>
            <person name="Wernegreen J.J."/>
            <person name="Sandstroem J.P."/>
            <person name="Moran N.A."/>
            <person name="Andersson S.G.E."/>
        </authorList>
    </citation>
    <scope>NUCLEOTIDE SEQUENCE [LARGE SCALE GENOMIC DNA]</scope>
    <source>
        <strain>Sg</strain>
    </source>
</reference>
<organism>
    <name type="scientific">Buchnera aphidicola subsp. Schizaphis graminum (strain Sg)</name>
    <dbReference type="NCBI Taxonomy" id="198804"/>
    <lineage>
        <taxon>Bacteria</taxon>
        <taxon>Pseudomonadati</taxon>
        <taxon>Pseudomonadota</taxon>
        <taxon>Gammaproteobacteria</taxon>
        <taxon>Enterobacterales</taxon>
        <taxon>Erwiniaceae</taxon>
        <taxon>Buchnera</taxon>
    </lineage>
</organism>
<feature type="chain" id="PRO_0000057921" description="6-carboxy-5,6,7,8-tetrahydropterin synthase">
    <location>
        <begin position="1"/>
        <end position="120"/>
    </location>
</feature>
<feature type="active site" description="Proton acceptor" evidence="1">
    <location>
        <position position="26"/>
    </location>
</feature>
<feature type="active site" description="Charge relay system" evidence="1">
    <location>
        <position position="70"/>
    </location>
</feature>
<feature type="active site" description="Charge relay system" evidence="1">
    <location>
        <position position="109"/>
    </location>
</feature>
<feature type="binding site" evidence="1">
    <location>
        <position position="15"/>
    </location>
    <ligand>
        <name>Zn(2+)</name>
        <dbReference type="ChEBI" id="CHEBI:29105"/>
    </ligand>
</feature>
<feature type="binding site" evidence="1">
    <location>
        <position position="30"/>
    </location>
    <ligand>
        <name>Zn(2+)</name>
        <dbReference type="ChEBI" id="CHEBI:29105"/>
    </ligand>
</feature>
<feature type="binding site" evidence="1">
    <location>
        <position position="32"/>
    </location>
    <ligand>
        <name>Zn(2+)</name>
        <dbReference type="ChEBI" id="CHEBI:29105"/>
    </ligand>
</feature>
<proteinExistence type="inferred from homology"/>
<accession>Q8K9D8</accession>
<name>QUED_BUCAP</name>
<comment type="function">
    <text evidence="1">Catalyzes the conversion of 7,8-dihydroneopterin triphosphate (H2NTP) to 6-carboxy-5,6,7,8-tetrahydropterin (CPH4) and acetaldehyde.</text>
</comment>
<comment type="catalytic activity">
    <reaction>
        <text>7,8-dihydroneopterin 3'-triphosphate + H2O = 6-carboxy-5,6,7,8-tetrahydropterin + triphosphate + acetaldehyde + 2 H(+)</text>
        <dbReference type="Rhea" id="RHEA:27966"/>
        <dbReference type="ChEBI" id="CHEBI:15343"/>
        <dbReference type="ChEBI" id="CHEBI:15377"/>
        <dbReference type="ChEBI" id="CHEBI:15378"/>
        <dbReference type="ChEBI" id="CHEBI:18036"/>
        <dbReference type="ChEBI" id="CHEBI:58462"/>
        <dbReference type="ChEBI" id="CHEBI:61032"/>
        <dbReference type="EC" id="4.1.2.50"/>
    </reaction>
</comment>
<comment type="cofactor">
    <cofactor evidence="1">
        <name>Zn(2+)</name>
        <dbReference type="ChEBI" id="CHEBI:29105"/>
    </cofactor>
    <text evidence="1">Binds 1 zinc ion per subunit.</text>
</comment>
<comment type="pathway">
    <text>Purine metabolism; 7-cyano-7-deazaguanine biosynthesis.</text>
</comment>
<comment type="miscellaneous">
    <text evidence="1">The active site is at the interface between 2 subunits. The proton acceptor Cys is on one subunit, and the charge relay system is on the other subunit (By similarity).</text>
</comment>
<comment type="similarity">
    <text evidence="2">Belongs to the PTPS family. QueD subfamily.</text>
</comment>
<evidence type="ECO:0000250" key="1"/>
<evidence type="ECO:0000305" key="2"/>
<protein>
    <recommendedName>
        <fullName>6-carboxy-5,6,7,8-tetrahydropterin synthase</fullName>
        <shortName>CPH4 synthase</shortName>
        <ecNumber>4.1.2.50</ecNumber>
    </recommendedName>
    <alternativeName>
        <fullName>Queuosine biosynthesis protein QueD</fullName>
    </alternativeName>
</protein>
<sequence>MKTIIFKDFQFEAAHYLPYVPKMHKCRRLHGHSFFVRLELKDKINEKNGWIIDYAEIKLAFQPIYDQLDHHFLNDIPGLENPTSEILAKWIWHRLKPKLSILNTIIIKETCTSGCIYQGF</sequence>
<gene>
    <name type="primary">queD</name>
    <name type="ordered locus">BUsg_402</name>
</gene>
<keyword id="KW-0456">Lyase</keyword>
<keyword id="KW-0479">Metal-binding</keyword>
<keyword id="KW-0671">Queuosine biosynthesis</keyword>
<keyword id="KW-0862">Zinc</keyword>